<sequence length="1219" mass="138416">MESSSPSSAEFDVFLSFRGFDTRNNFTGHLQKALRLRGIDSFIDDRLRRGDNLTALFDRIEKSKIAIIVFSTNYANSAWCLRELVKILECRNSNQQLVVPIFYKVDKSDVEKQRNSFAVPFKLPELTFPGVTPEEISSWKAALASASNILGYVVKEISTSEAKLVDEIAVDTFKKLNDLAPSGNEGLVGIESRLKNLEKLLSWEDLDTVHIIGIVGMVGIGKTTLADCLYGRMRGQFDGSCFLTNIRENSGRSGLESLLQKLFSTVLNDRDLEIGAPGNAHERFERRLKSKRLLIVLDDVNDEKQIRYLMGHCKWYQGGSRIIITTRDSKLIETIKGRKYVLPKLNDREALKLFSLNAFSNSFPLKEFEGLTNMVLDYAKGHPLALKVLGSDLCERDDLYWEAKLDRLKSRSHGDIYEVLETSYEELTTEQKNVFLDIACFFRSENVDYVTSLLNSHGVDVSGVVKDLVDKCLITLSDNRIEMHDMLQTMAKEISLKVETIGIRDCRWLSRHGNQCQWHIRLWDSEDICDLLTEGLGTDKIRGIFLDTSKLRAMRLSAKAFQGMYNLKYLKIYDSHCSRGCEAEFKLHLRRGLSFLPNELTYLHWHGYPLQSIPLDFDPKNLVDLKLPHSQLEEIWDDEKDVGMLKWVDLSHSINLRQCLGLANAHNLERLNLEGCTSLKKLPSTINCLEKLIYLNLRDCTSLRSLPKGIKTQSLQTLILSGCSSLKKFPLISENVEVLLLDGTVIKSLPESIQTFRRLALLNLKNCKKLKHLSSDLYKLKCLQELILSGCSQLEVFPEIKEDMESLEILLMDDTSITEMPKMMHLSNIKTFSLCGTSSHVSVSMFFMPPTLGCSRLTDLYLSRCSLYKLPDNIGGLSSLQSLCLSGNNIENLPESFNQLNNLKWFDLKFCKMLKSLPVLPQNLQYLDAHECESLETLANPLTPLTVGERIHSMFIFSNCYKLNQDAQASLVGHARIKSQLMANASAKRYYRGFVPEPLVGICYPATEIPSWFCHQRLGRSLEIPLPPHWCDINFVGLALSVVVSFKDYEDSAKRFSVKCCGNFENKDSSFTRFDFTLAGWNEPCGSLSHESRKLTSDHVFMGYNSCFLVKNVHGESNSCCYTKASFEFYVTDDETRKKIETCEVIKCGMSLMYVPEDDDCMLLKKTNIVQLSLKSGPSCSYDLDDVMDDVRPKRGLCQFVGGEEPGCKRRKEEKITVR</sequence>
<dbReference type="EC" id="3.2.2.6" evidence="2"/>
<dbReference type="EMBL" id="AL049638">
    <property type="protein sequence ID" value="CAB40942.1"/>
    <property type="molecule type" value="Genomic_DNA"/>
</dbReference>
<dbReference type="EMBL" id="AL161533">
    <property type="protein sequence ID" value="CAB78244.1"/>
    <property type="molecule type" value="Genomic_DNA"/>
</dbReference>
<dbReference type="EMBL" id="CP002687">
    <property type="protein sequence ID" value="AEE83083.1"/>
    <property type="molecule type" value="Genomic_DNA"/>
</dbReference>
<dbReference type="EMBL" id="AK175839">
    <property type="protein sequence ID" value="BAD43602.1"/>
    <property type="molecule type" value="mRNA"/>
</dbReference>
<dbReference type="EMBL" id="AK175963">
    <property type="protein sequence ID" value="BAD43726.1"/>
    <property type="molecule type" value="mRNA"/>
</dbReference>
<dbReference type="PIR" id="T06608">
    <property type="entry name" value="T06608"/>
</dbReference>
<dbReference type="RefSeq" id="NP_192938.1">
    <property type="nucleotide sequence ID" value="NM_117271.3"/>
</dbReference>
<dbReference type="SMR" id="Q9SZ66"/>
<dbReference type="FunCoup" id="Q9SZ66">
    <property type="interactions" value="111"/>
</dbReference>
<dbReference type="STRING" id="3702.Q9SZ66"/>
<dbReference type="iPTMnet" id="Q9SZ66"/>
<dbReference type="PaxDb" id="3702-AT4G12010.1"/>
<dbReference type="ProteomicsDB" id="224293"/>
<dbReference type="EnsemblPlants" id="AT4G12010.1">
    <property type="protein sequence ID" value="AT4G12010.1"/>
    <property type="gene ID" value="AT4G12010"/>
</dbReference>
<dbReference type="GeneID" id="826809"/>
<dbReference type="Gramene" id="AT4G12010.1">
    <property type="protein sequence ID" value="AT4G12010.1"/>
    <property type="gene ID" value="AT4G12010"/>
</dbReference>
<dbReference type="KEGG" id="ath:AT4G12010"/>
<dbReference type="Araport" id="AT4G12010"/>
<dbReference type="TAIR" id="AT4G12010">
    <property type="gene designation" value="DSC1"/>
</dbReference>
<dbReference type="eggNOG" id="ENOG502SI7S">
    <property type="taxonomic scope" value="Eukaryota"/>
</dbReference>
<dbReference type="HOGENOM" id="CLU_001561_0_1_1"/>
<dbReference type="InParanoid" id="Q9SZ66"/>
<dbReference type="OMA" id="YWEAKLD"/>
<dbReference type="PhylomeDB" id="Q9SZ66"/>
<dbReference type="PRO" id="PR:Q9SZ66"/>
<dbReference type="Proteomes" id="UP000006548">
    <property type="component" value="Chromosome 4"/>
</dbReference>
<dbReference type="ExpressionAtlas" id="Q9SZ66">
    <property type="expression patterns" value="baseline and differential"/>
</dbReference>
<dbReference type="GO" id="GO:0043531">
    <property type="term" value="F:ADP binding"/>
    <property type="evidence" value="ECO:0007669"/>
    <property type="project" value="InterPro"/>
</dbReference>
<dbReference type="GO" id="GO:0005524">
    <property type="term" value="F:ATP binding"/>
    <property type="evidence" value="ECO:0007669"/>
    <property type="project" value="UniProtKB-KW"/>
</dbReference>
<dbReference type="GO" id="GO:0061809">
    <property type="term" value="F:NAD+ nucleosidase activity, cyclic ADP-ribose generating"/>
    <property type="evidence" value="ECO:0007669"/>
    <property type="project" value="UniProtKB-EC"/>
</dbReference>
<dbReference type="GO" id="GO:0042742">
    <property type="term" value="P:defense response to bacterium"/>
    <property type="evidence" value="ECO:0000315"/>
    <property type="project" value="UniProtKB"/>
</dbReference>
<dbReference type="GO" id="GO:0009626">
    <property type="term" value="P:plant-type hypersensitive response"/>
    <property type="evidence" value="ECO:0007669"/>
    <property type="project" value="UniProtKB-KW"/>
</dbReference>
<dbReference type="GO" id="GO:0007165">
    <property type="term" value="P:signal transduction"/>
    <property type="evidence" value="ECO:0007669"/>
    <property type="project" value="InterPro"/>
</dbReference>
<dbReference type="FunFam" id="1.10.8.430:FF:000002">
    <property type="entry name" value="Disease resistance protein (TIR-NBS-LRR class)"/>
    <property type="match status" value="1"/>
</dbReference>
<dbReference type="FunFam" id="3.40.50.10140:FF:000007">
    <property type="entry name" value="Disease resistance protein (TIR-NBS-LRR class)"/>
    <property type="match status" value="1"/>
</dbReference>
<dbReference type="FunFam" id="3.40.50.300:FF:001862">
    <property type="entry name" value="Disease resistance protein RPS4"/>
    <property type="match status" value="1"/>
</dbReference>
<dbReference type="FunFam" id="3.80.10.10:FF:000386">
    <property type="entry name" value="Disease resistance protein RPS4"/>
    <property type="match status" value="1"/>
</dbReference>
<dbReference type="Gene3D" id="1.10.8.430">
    <property type="entry name" value="Helical domain of apoptotic protease-activating factors"/>
    <property type="match status" value="1"/>
</dbReference>
<dbReference type="Gene3D" id="3.40.50.300">
    <property type="entry name" value="P-loop containing nucleotide triphosphate hydrolases"/>
    <property type="match status" value="1"/>
</dbReference>
<dbReference type="Gene3D" id="3.80.10.10">
    <property type="entry name" value="Ribonuclease Inhibitor"/>
    <property type="match status" value="2"/>
</dbReference>
<dbReference type="Gene3D" id="3.40.50.10140">
    <property type="entry name" value="Toll/interleukin-1 receptor homology (TIR) domain"/>
    <property type="match status" value="1"/>
</dbReference>
<dbReference type="InterPro" id="IPR042197">
    <property type="entry name" value="Apaf_helical"/>
</dbReference>
<dbReference type="InterPro" id="IPR045344">
    <property type="entry name" value="C-JID"/>
</dbReference>
<dbReference type="InterPro" id="IPR044974">
    <property type="entry name" value="Disease_R_plants"/>
</dbReference>
<dbReference type="InterPro" id="IPR001611">
    <property type="entry name" value="Leu-rich_rpt"/>
</dbReference>
<dbReference type="InterPro" id="IPR011713">
    <property type="entry name" value="Leu-rich_rpt_3"/>
</dbReference>
<dbReference type="InterPro" id="IPR032675">
    <property type="entry name" value="LRR_dom_sf"/>
</dbReference>
<dbReference type="InterPro" id="IPR002182">
    <property type="entry name" value="NB-ARC"/>
</dbReference>
<dbReference type="InterPro" id="IPR027417">
    <property type="entry name" value="P-loop_NTPase"/>
</dbReference>
<dbReference type="InterPro" id="IPR000157">
    <property type="entry name" value="TIR_dom"/>
</dbReference>
<dbReference type="InterPro" id="IPR035897">
    <property type="entry name" value="Toll_tir_struct_dom_sf"/>
</dbReference>
<dbReference type="InterPro" id="IPR036390">
    <property type="entry name" value="WH_DNA-bd_sf"/>
</dbReference>
<dbReference type="PANTHER" id="PTHR11017:SF576">
    <property type="entry name" value="DISEASE RESISTANCE-LIKE PROTEIN DSC1"/>
    <property type="match status" value="1"/>
</dbReference>
<dbReference type="PANTHER" id="PTHR11017">
    <property type="entry name" value="LEUCINE-RICH REPEAT-CONTAINING PROTEIN"/>
    <property type="match status" value="1"/>
</dbReference>
<dbReference type="Pfam" id="PF20160">
    <property type="entry name" value="C-JID"/>
    <property type="match status" value="1"/>
</dbReference>
<dbReference type="Pfam" id="PF07725">
    <property type="entry name" value="LRR_3"/>
    <property type="match status" value="1"/>
</dbReference>
<dbReference type="Pfam" id="PF13855">
    <property type="entry name" value="LRR_8"/>
    <property type="match status" value="1"/>
</dbReference>
<dbReference type="Pfam" id="PF00931">
    <property type="entry name" value="NB-ARC"/>
    <property type="match status" value="1"/>
</dbReference>
<dbReference type="Pfam" id="PF01582">
    <property type="entry name" value="TIR"/>
    <property type="match status" value="1"/>
</dbReference>
<dbReference type="Pfam" id="PF23282">
    <property type="entry name" value="WHD_ROQ1"/>
    <property type="match status" value="1"/>
</dbReference>
<dbReference type="PRINTS" id="PR00364">
    <property type="entry name" value="DISEASERSIST"/>
</dbReference>
<dbReference type="SMART" id="SM00255">
    <property type="entry name" value="TIR"/>
    <property type="match status" value="1"/>
</dbReference>
<dbReference type="SUPFAM" id="SSF52058">
    <property type="entry name" value="L domain-like"/>
    <property type="match status" value="1"/>
</dbReference>
<dbReference type="SUPFAM" id="SSF52540">
    <property type="entry name" value="P-loop containing nucleoside triphosphate hydrolases"/>
    <property type="match status" value="1"/>
</dbReference>
<dbReference type="SUPFAM" id="SSF52047">
    <property type="entry name" value="RNI-like"/>
    <property type="match status" value="1"/>
</dbReference>
<dbReference type="SUPFAM" id="SSF52200">
    <property type="entry name" value="Toll/Interleukin receptor TIR domain"/>
    <property type="match status" value="1"/>
</dbReference>
<dbReference type="SUPFAM" id="SSF46785">
    <property type="entry name" value="Winged helix' DNA-binding domain"/>
    <property type="match status" value="1"/>
</dbReference>
<dbReference type="PROSITE" id="PS51450">
    <property type="entry name" value="LRR"/>
    <property type="match status" value="5"/>
</dbReference>
<dbReference type="PROSITE" id="PS50104">
    <property type="entry name" value="TIR"/>
    <property type="match status" value="1"/>
</dbReference>
<evidence type="ECO:0000255" key="1"/>
<evidence type="ECO:0000255" key="2">
    <source>
        <dbReference type="PROSITE-ProRule" id="PRU00204"/>
    </source>
</evidence>
<evidence type="ECO:0000269" key="3">
    <source>
    </source>
</evidence>
<evidence type="ECO:0000303" key="4">
    <source>
    </source>
</evidence>
<evidence type="ECO:0000305" key="5"/>
<evidence type="ECO:0000312" key="6">
    <source>
        <dbReference type="Araport" id="AT4G12010"/>
    </source>
</evidence>
<evidence type="ECO:0000312" key="7">
    <source>
        <dbReference type="EMBL" id="CAB40942.1"/>
    </source>
</evidence>
<proteinExistence type="evidence at protein level"/>
<organism>
    <name type="scientific">Arabidopsis thaliana</name>
    <name type="common">Mouse-ear cress</name>
    <dbReference type="NCBI Taxonomy" id="3702"/>
    <lineage>
        <taxon>Eukaryota</taxon>
        <taxon>Viridiplantae</taxon>
        <taxon>Streptophyta</taxon>
        <taxon>Embryophyta</taxon>
        <taxon>Tracheophyta</taxon>
        <taxon>Spermatophyta</taxon>
        <taxon>Magnoliopsida</taxon>
        <taxon>eudicotyledons</taxon>
        <taxon>Gunneridae</taxon>
        <taxon>Pentapetalae</taxon>
        <taxon>rosids</taxon>
        <taxon>malvids</taxon>
        <taxon>Brassicales</taxon>
        <taxon>Brassicaceae</taxon>
        <taxon>Camelineae</taxon>
        <taxon>Arabidopsis</taxon>
    </lineage>
</organism>
<keyword id="KW-0067">ATP-binding</keyword>
<keyword id="KW-0378">Hydrolase</keyword>
<keyword id="KW-0381">Hypersensitive response</keyword>
<keyword id="KW-0433">Leucine-rich repeat</keyword>
<keyword id="KW-0520">NAD</keyword>
<keyword id="KW-0547">Nucleotide-binding</keyword>
<keyword id="KW-0611">Plant defense</keyword>
<keyword id="KW-1185">Reference proteome</keyword>
<keyword id="KW-0677">Repeat</keyword>
<feature type="chain" id="PRO_0000442293" description="Disease resistance-like protein DSC1">
    <location>
        <begin position="1"/>
        <end position="1219"/>
    </location>
</feature>
<feature type="domain" description="TIR" evidence="2">
    <location>
        <begin position="9"/>
        <end position="176"/>
    </location>
</feature>
<feature type="domain" description="NB-ARC" evidence="1">
    <location>
        <begin position="197"/>
        <end position="446"/>
    </location>
</feature>
<feature type="repeat" description="LRR 1" evidence="1">
    <location>
        <begin position="468"/>
        <end position="493"/>
    </location>
</feature>
<feature type="repeat" description="LRR 2" evidence="1">
    <location>
        <begin position="538"/>
        <end position="563"/>
    </location>
</feature>
<feature type="repeat" description="LRR 3" evidence="1">
    <location>
        <begin position="597"/>
        <end position="619"/>
    </location>
</feature>
<feature type="repeat" description="LRR 4" evidence="1">
    <location>
        <begin position="620"/>
        <end position="642"/>
    </location>
</feature>
<feature type="repeat" description="LRR 5" evidence="1">
    <location>
        <begin position="665"/>
        <end position="689"/>
    </location>
</feature>
<feature type="repeat" description="LRR 6" evidence="1">
    <location>
        <begin position="690"/>
        <end position="713"/>
    </location>
</feature>
<feature type="repeat" description="LRR 7" evidence="1">
    <location>
        <begin position="733"/>
        <end position="757"/>
    </location>
</feature>
<feature type="repeat" description="LRR 8" evidence="1">
    <location>
        <begin position="759"/>
        <end position="780"/>
    </location>
</feature>
<feature type="repeat" description="LRR 9" evidence="1">
    <location>
        <begin position="804"/>
        <end position="827"/>
    </location>
</feature>
<feature type="repeat" description="LRR 10" evidence="1">
    <location>
        <begin position="854"/>
        <end position="877"/>
    </location>
</feature>
<feature type="repeat" description="LRR 11" evidence="1">
    <location>
        <begin position="878"/>
        <end position="899"/>
    </location>
</feature>
<feature type="active site" evidence="2">
    <location>
        <position position="83"/>
    </location>
</feature>
<feature type="binding site" evidence="1">
    <location>
        <begin position="216"/>
        <end position="222"/>
    </location>
    <ligand>
        <name>ATP</name>
        <dbReference type="ChEBI" id="CHEBI:30616"/>
    </ligand>
</feature>
<feature type="mutagenesis site" description="Loss of function." evidence="3">
    <original>GK</original>
    <variation>AA</variation>
    <location>
        <begin position="221"/>
        <end position="222"/>
    </location>
</feature>
<reference key="1">
    <citation type="journal article" date="1999" name="Nature">
        <title>Sequence and analysis of chromosome 4 of the plant Arabidopsis thaliana.</title>
        <authorList>
            <person name="Mayer K.F.X."/>
            <person name="Schueller C."/>
            <person name="Wambutt R."/>
            <person name="Murphy G."/>
            <person name="Volckaert G."/>
            <person name="Pohl T."/>
            <person name="Duesterhoeft A."/>
            <person name="Stiekema W."/>
            <person name="Entian K.-D."/>
            <person name="Terryn N."/>
            <person name="Harris B."/>
            <person name="Ansorge W."/>
            <person name="Brandt P."/>
            <person name="Grivell L.A."/>
            <person name="Rieger M."/>
            <person name="Weichselgartner M."/>
            <person name="de Simone V."/>
            <person name="Obermaier B."/>
            <person name="Mache R."/>
            <person name="Mueller M."/>
            <person name="Kreis M."/>
            <person name="Delseny M."/>
            <person name="Puigdomenech P."/>
            <person name="Watson M."/>
            <person name="Schmidtheini T."/>
            <person name="Reichert B."/>
            <person name="Portetelle D."/>
            <person name="Perez-Alonso M."/>
            <person name="Boutry M."/>
            <person name="Bancroft I."/>
            <person name="Vos P."/>
            <person name="Hoheisel J."/>
            <person name="Zimmermann W."/>
            <person name="Wedler H."/>
            <person name="Ridley P."/>
            <person name="Langham S.-A."/>
            <person name="McCullagh B."/>
            <person name="Bilham L."/>
            <person name="Robben J."/>
            <person name="van der Schueren J."/>
            <person name="Grymonprez B."/>
            <person name="Chuang Y.-J."/>
            <person name="Vandenbussche F."/>
            <person name="Braeken M."/>
            <person name="Weltjens I."/>
            <person name="Voet M."/>
            <person name="Bastiaens I."/>
            <person name="Aert R."/>
            <person name="Defoor E."/>
            <person name="Weitzenegger T."/>
            <person name="Bothe G."/>
            <person name="Ramsperger U."/>
            <person name="Hilbert H."/>
            <person name="Braun M."/>
            <person name="Holzer E."/>
            <person name="Brandt A."/>
            <person name="Peters S."/>
            <person name="van Staveren M."/>
            <person name="Dirkse W."/>
            <person name="Mooijman P."/>
            <person name="Klein Lankhorst R."/>
            <person name="Rose M."/>
            <person name="Hauf J."/>
            <person name="Koetter P."/>
            <person name="Berneiser S."/>
            <person name="Hempel S."/>
            <person name="Feldpausch M."/>
            <person name="Lamberth S."/>
            <person name="Van den Daele H."/>
            <person name="De Keyser A."/>
            <person name="Buysshaert C."/>
            <person name="Gielen J."/>
            <person name="Villarroel R."/>
            <person name="De Clercq R."/>
            <person name="van Montagu M."/>
            <person name="Rogers J."/>
            <person name="Cronin A."/>
            <person name="Quail M.A."/>
            <person name="Bray-Allen S."/>
            <person name="Clark L."/>
            <person name="Doggett J."/>
            <person name="Hall S."/>
            <person name="Kay M."/>
            <person name="Lennard N."/>
            <person name="McLay K."/>
            <person name="Mayes R."/>
            <person name="Pettett A."/>
            <person name="Rajandream M.A."/>
            <person name="Lyne M."/>
            <person name="Benes V."/>
            <person name="Rechmann S."/>
            <person name="Borkova D."/>
            <person name="Bloecker H."/>
            <person name="Scharfe M."/>
            <person name="Grimm M."/>
            <person name="Loehnert T.-H."/>
            <person name="Dose S."/>
            <person name="de Haan M."/>
            <person name="Maarse A.C."/>
            <person name="Schaefer M."/>
            <person name="Mueller-Auer S."/>
            <person name="Gabel C."/>
            <person name="Fuchs M."/>
            <person name="Fartmann B."/>
            <person name="Granderath K."/>
            <person name="Dauner D."/>
            <person name="Herzl A."/>
            <person name="Neumann S."/>
            <person name="Argiriou A."/>
            <person name="Vitale D."/>
            <person name="Liguori R."/>
            <person name="Piravandi E."/>
            <person name="Massenet O."/>
            <person name="Quigley F."/>
            <person name="Clabauld G."/>
            <person name="Muendlein A."/>
            <person name="Felber R."/>
            <person name="Schnabl S."/>
            <person name="Hiller R."/>
            <person name="Schmidt W."/>
            <person name="Lecharny A."/>
            <person name="Aubourg S."/>
            <person name="Chefdor F."/>
            <person name="Cooke R."/>
            <person name="Berger C."/>
            <person name="Monfort A."/>
            <person name="Casacuberta E."/>
            <person name="Gibbons T."/>
            <person name="Weber N."/>
            <person name="Vandenbol M."/>
            <person name="Bargues M."/>
            <person name="Terol J."/>
            <person name="Torres A."/>
            <person name="Perez-Perez A."/>
            <person name="Purnelle B."/>
            <person name="Bent E."/>
            <person name="Johnson S."/>
            <person name="Tacon D."/>
            <person name="Jesse T."/>
            <person name="Heijnen L."/>
            <person name="Schwarz S."/>
            <person name="Scholler P."/>
            <person name="Heber S."/>
            <person name="Francs P."/>
            <person name="Bielke C."/>
            <person name="Frishman D."/>
            <person name="Haase D."/>
            <person name="Lemcke K."/>
            <person name="Mewes H.-W."/>
            <person name="Stocker S."/>
            <person name="Zaccaria P."/>
            <person name="Bevan M."/>
            <person name="Wilson R.K."/>
            <person name="de la Bastide M."/>
            <person name="Habermann K."/>
            <person name="Parnell L."/>
            <person name="Dedhia N."/>
            <person name="Gnoj L."/>
            <person name="Schutz K."/>
            <person name="Huang E."/>
            <person name="Spiegel L."/>
            <person name="Sekhon M."/>
            <person name="Murray J."/>
            <person name="Sheet P."/>
            <person name="Cordes M."/>
            <person name="Abu-Threideh J."/>
            <person name="Stoneking T."/>
            <person name="Kalicki J."/>
            <person name="Graves T."/>
            <person name="Harmon G."/>
            <person name="Edwards J."/>
            <person name="Latreille P."/>
            <person name="Courtney L."/>
            <person name="Cloud J."/>
            <person name="Abbott A."/>
            <person name="Scott K."/>
            <person name="Johnson D."/>
            <person name="Minx P."/>
            <person name="Bentley D."/>
            <person name="Fulton B."/>
            <person name="Miller N."/>
            <person name="Greco T."/>
            <person name="Kemp K."/>
            <person name="Kramer J."/>
            <person name="Fulton L."/>
            <person name="Mardis E."/>
            <person name="Dante M."/>
            <person name="Pepin K."/>
            <person name="Hillier L.W."/>
            <person name="Nelson J."/>
            <person name="Spieth J."/>
            <person name="Ryan E."/>
            <person name="Andrews S."/>
            <person name="Geisel C."/>
            <person name="Layman D."/>
            <person name="Du H."/>
            <person name="Ali J."/>
            <person name="Berghoff A."/>
            <person name="Jones K."/>
            <person name="Drone K."/>
            <person name="Cotton M."/>
            <person name="Joshu C."/>
            <person name="Antonoiu B."/>
            <person name="Zidanic M."/>
            <person name="Strong C."/>
            <person name="Sun H."/>
            <person name="Lamar B."/>
            <person name="Yordan C."/>
            <person name="Ma P."/>
            <person name="Zhong J."/>
            <person name="Preston R."/>
            <person name="Vil D."/>
            <person name="Shekher M."/>
            <person name="Matero A."/>
            <person name="Shah R."/>
            <person name="Swaby I.K."/>
            <person name="O'Shaughnessy A."/>
            <person name="Rodriguez M."/>
            <person name="Hoffman J."/>
            <person name="Till S."/>
            <person name="Granat S."/>
            <person name="Shohdy N."/>
            <person name="Hasegawa A."/>
            <person name="Hameed A."/>
            <person name="Lodhi M."/>
            <person name="Johnson A."/>
            <person name="Chen E."/>
            <person name="Marra M.A."/>
            <person name="Martienssen R."/>
            <person name="McCombie W.R."/>
        </authorList>
    </citation>
    <scope>NUCLEOTIDE SEQUENCE [LARGE SCALE GENOMIC DNA]</scope>
    <source>
        <strain>cv. Columbia</strain>
    </source>
</reference>
<reference key="2">
    <citation type="journal article" date="2017" name="Plant J.">
        <title>Araport11: a complete reannotation of the Arabidopsis thaliana reference genome.</title>
        <authorList>
            <person name="Cheng C.Y."/>
            <person name="Krishnakumar V."/>
            <person name="Chan A.P."/>
            <person name="Thibaud-Nissen F."/>
            <person name="Schobel S."/>
            <person name="Town C.D."/>
        </authorList>
    </citation>
    <scope>GENOME REANNOTATION</scope>
    <source>
        <strain>cv. Columbia</strain>
    </source>
</reference>
<reference key="3">
    <citation type="submission" date="2004-09" db="EMBL/GenBank/DDBJ databases">
        <title>Large-scale analysis of RIKEN Arabidopsis full-length (RAFL) cDNAs.</title>
        <authorList>
            <person name="Totoki Y."/>
            <person name="Seki M."/>
            <person name="Ishida J."/>
            <person name="Nakajima M."/>
            <person name="Enju A."/>
            <person name="Kamiya A."/>
            <person name="Narusaka M."/>
            <person name="Shin-i T."/>
            <person name="Nakagawa M."/>
            <person name="Sakamoto N."/>
            <person name="Oishi K."/>
            <person name="Kohara Y."/>
            <person name="Kobayashi M."/>
            <person name="Toyoda A."/>
            <person name="Sakaki Y."/>
            <person name="Sakurai T."/>
            <person name="Iida K."/>
            <person name="Akiyama K."/>
            <person name="Satou M."/>
            <person name="Toyoda T."/>
            <person name="Konagaya A."/>
            <person name="Carninci P."/>
            <person name="Kawai J."/>
            <person name="Hayashizaki Y."/>
            <person name="Shinozaki K."/>
        </authorList>
    </citation>
    <scope>NUCLEOTIDE SEQUENCE [LARGE SCALE MRNA] OF 1-536</scope>
    <source>
        <strain>cv. Columbia</strain>
    </source>
</reference>
<reference key="4">
    <citation type="journal article" date="2017" name="Cell Host Microbe">
        <title>Matching NLR immune receptors to autoimmunity in camta3 mutants using antimorphic NLR alleles.</title>
        <authorList>
            <person name="Lolle S."/>
            <person name="Greeff C."/>
            <person name="Petersen K."/>
            <person name="Roux M."/>
            <person name="Jensen M.K."/>
            <person name="Bressendorff S."/>
            <person name="Rodriguez E."/>
            <person name="Soemark K."/>
            <person name="Mundy J."/>
            <person name="Petersen M."/>
        </authorList>
    </citation>
    <scope>FUNCTION</scope>
    <scope>INTERACTION WITH CAMTA3 AND DSC2</scope>
    <scope>MUTAGENESIS OF 221-GLY-LYS-222</scope>
</reference>
<name>DSC1_ARATH</name>
<accession>Q9SZ66</accession>
<accession>Q680A4</accession>
<protein>
    <recommendedName>
        <fullName evidence="5">Disease resistance-like protein DSC1</fullName>
        <ecNumber evidence="2">3.2.2.6</ecNumber>
    </recommendedName>
    <alternativeName>
        <fullName evidence="4">Protein DOMINANT SUPPRESSOR OF CAMTA3 NUMBER 1</fullName>
    </alternativeName>
</protein>
<comment type="function">
    <text evidence="3">TIR-NB-LRR receptor-like protein involved in plant defense. Acts as a trigger of hypersensitive response (HR). Functions as a guard of CAMTA3, a negative regulator of immunity, during pathogen infection.</text>
</comment>
<comment type="catalytic activity">
    <reaction evidence="2">
        <text>NAD(+) + H2O = ADP-D-ribose + nicotinamide + H(+)</text>
        <dbReference type="Rhea" id="RHEA:16301"/>
        <dbReference type="ChEBI" id="CHEBI:15377"/>
        <dbReference type="ChEBI" id="CHEBI:15378"/>
        <dbReference type="ChEBI" id="CHEBI:17154"/>
        <dbReference type="ChEBI" id="CHEBI:57540"/>
        <dbReference type="ChEBI" id="CHEBI:57967"/>
        <dbReference type="EC" id="3.2.2.6"/>
    </reaction>
    <physiologicalReaction direction="left-to-right" evidence="2">
        <dbReference type="Rhea" id="RHEA:16302"/>
    </physiologicalReaction>
</comment>
<comment type="subunit">
    <text evidence="3">Interacts with CAMTA3 and DSC2.</text>
</comment>
<comment type="domain">
    <text evidence="2">The TIR domain mediates NAD(+) hydrolase (NADase) activity. Self-association of TIR domains is required for NADase activity.</text>
</comment>
<comment type="similarity">
    <text evidence="5">Belongs to the disease resistance NB-LRR family.</text>
</comment>
<gene>
    <name evidence="4" type="primary">DSC1</name>
    <name evidence="6" type="ordered locus">At4g12010</name>
    <name evidence="7" type="ORF">F16J13.80</name>
</gene>